<accession>Q3AYS3</accession>
<dbReference type="EC" id="2.7.2.11" evidence="1"/>
<dbReference type="EMBL" id="CP000097">
    <property type="protein sequence ID" value="ABB25754.1"/>
    <property type="molecule type" value="Genomic_DNA"/>
</dbReference>
<dbReference type="RefSeq" id="WP_011359594.1">
    <property type="nucleotide sequence ID" value="NC_007513.1"/>
</dbReference>
<dbReference type="SMR" id="Q3AYS3"/>
<dbReference type="STRING" id="316279.Syncc9902_0786"/>
<dbReference type="KEGG" id="sye:Syncc9902_0786"/>
<dbReference type="eggNOG" id="COG0263">
    <property type="taxonomic scope" value="Bacteria"/>
</dbReference>
<dbReference type="HOGENOM" id="CLU_025400_2_0_3"/>
<dbReference type="OrthoDB" id="9804434at2"/>
<dbReference type="UniPathway" id="UPA00098">
    <property type="reaction ID" value="UER00359"/>
</dbReference>
<dbReference type="Proteomes" id="UP000002712">
    <property type="component" value="Chromosome"/>
</dbReference>
<dbReference type="GO" id="GO:0005829">
    <property type="term" value="C:cytosol"/>
    <property type="evidence" value="ECO:0007669"/>
    <property type="project" value="TreeGrafter"/>
</dbReference>
<dbReference type="GO" id="GO:0005524">
    <property type="term" value="F:ATP binding"/>
    <property type="evidence" value="ECO:0007669"/>
    <property type="project" value="UniProtKB-KW"/>
</dbReference>
<dbReference type="GO" id="GO:0004349">
    <property type="term" value="F:glutamate 5-kinase activity"/>
    <property type="evidence" value="ECO:0007669"/>
    <property type="project" value="UniProtKB-UniRule"/>
</dbReference>
<dbReference type="GO" id="GO:0003723">
    <property type="term" value="F:RNA binding"/>
    <property type="evidence" value="ECO:0007669"/>
    <property type="project" value="InterPro"/>
</dbReference>
<dbReference type="GO" id="GO:0055129">
    <property type="term" value="P:L-proline biosynthetic process"/>
    <property type="evidence" value="ECO:0007669"/>
    <property type="project" value="UniProtKB-UniRule"/>
</dbReference>
<dbReference type="CDD" id="cd04242">
    <property type="entry name" value="AAK_G5K_ProB"/>
    <property type="match status" value="1"/>
</dbReference>
<dbReference type="CDD" id="cd21157">
    <property type="entry name" value="PUA_G5K"/>
    <property type="match status" value="1"/>
</dbReference>
<dbReference type="FunFam" id="3.40.1160.10:FF:000018">
    <property type="entry name" value="Glutamate 5-kinase"/>
    <property type="match status" value="1"/>
</dbReference>
<dbReference type="Gene3D" id="3.40.1160.10">
    <property type="entry name" value="Acetylglutamate kinase-like"/>
    <property type="match status" value="1"/>
</dbReference>
<dbReference type="Gene3D" id="2.30.130.10">
    <property type="entry name" value="PUA domain"/>
    <property type="match status" value="1"/>
</dbReference>
<dbReference type="HAMAP" id="MF_00456">
    <property type="entry name" value="ProB"/>
    <property type="match status" value="1"/>
</dbReference>
<dbReference type="InterPro" id="IPR036393">
    <property type="entry name" value="AceGlu_kinase-like_sf"/>
</dbReference>
<dbReference type="InterPro" id="IPR001048">
    <property type="entry name" value="Asp/Glu/Uridylate_kinase"/>
</dbReference>
<dbReference type="InterPro" id="IPR041739">
    <property type="entry name" value="G5K_ProB"/>
</dbReference>
<dbReference type="InterPro" id="IPR001057">
    <property type="entry name" value="Glu/AcGlu_kinase"/>
</dbReference>
<dbReference type="InterPro" id="IPR011529">
    <property type="entry name" value="Glu_5kinase"/>
</dbReference>
<dbReference type="InterPro" id="IPR005715">
    <property type="entry name" value="Glu_5kinase/COase_Synthase"/>
</dbReference>
<dbReference type="InterPro" id="IPR019797">
    <property type="entry name" value="Glutamate_5-kinase_CS"/>
</dbReference>
<dbReference type="InterPro" id="IPR002478">
    <property type="entry name" value="PUA"/>
</dbReference>
<dbReference type="InterPro" id="IPR015947">
    <property type="entry name" value="PUA-like_sf"/>
</dbReference>
<dbReference type="InterPro" id="IPR036974">
    <property type="entry name" value="PUA_sf"/>
</dbReference>
<dbReference type="NCBIfam" id="TIGR01027">
    <property type="entry name" value="proB"/>
    <property type="match status" value="1"/>
</dbReference>
<dbReference type="PANTHER" id="PTHR43654">
    <property type="entry name" value="GLUTAMATE 5-KINASE"/>
    <property type="match status" value="1"/>
</dbReference>
<dbReference type="PANTHER" id="PTHR43654:SF3">
    <property type="entry name" value="GLUTAMATE 5-KINASE"/>
    <property type="match status" value="1"/>
</dbReference>
<dbReference type="Pfam" id="PF00696">
    <property type="entry name" value="AA_kinase"/>
    <property type="match status" value="1"/>
</dbReference>
<dbReference type="Pfam" id="PF01472">
    <property type="entry name" value="PUA"/>
    <property type="match status" value="1"/>
</dbReference>
<dbReference type="PIRSF" id="PIRSF000729">
    <property type="entry name" value="GK"/>
    <property type="match status" value="1"/>
</dbReference>
<dbReference type="PRINTS" id="PR00474">
    <property type="entry name" value="GLU5KINASE"/>
</dbReference>
<dbReference type="SMART" id="SM00359">
    <property type="entry name" value="PUA"/>
    <property type="match status" value="1"/>
</dbReference>
<dbReference type="SUPFAM" id="SSF53633">
    <property type="entry name" value="Carbamate kinase-like"/>
    <property type="match status" value="1"/>
</dbReference>
<dbReference type="SUPFAM" id="SSF88697">
    <property type="entry name" value="PUA domain-like"/>
    <property type="match status" value="1"/>
</dbReference>
<dbReference type="PROSITE" id="PS00902">
    <property type="entry name" value="GLUTAMATE_5_KINASE"/>
    <property type="match status" value="1"/>
</dbReference>
<dbReference type="PROSITE" id="PS50890">
    <property type="entry name" value="PUA"/>
    <property type="match status" value="1"/>
</dbReference>
<proteinExistence type="inferred from homology"/>
<comment type="function">
    <text evidence="1">Catalyzes the transfer of a phosphate group to glutamate to form L-glutamate 5-phosphate.</text>
</comment>
<comment type="catalytic activity">
    <reaction evidence="1">
        <text>L-glutamate + ATP = L-glutamyl 5-phosphate + ADP</text>
        <dbReference type="Rhea" id="RHEA:14877"/>
        <dbReference type="ChEBI" id="CHEBI:29985"/>
        <dbReference type="ChEBI" id="CHEBI:30616"/>
        <dbReference type="ChEBI" id="CHEBI:58274"/>
        <dbReference type="ChEBI" id="CHEBI:456216"/>
        <dbReference type="EC" id="2.7.2.11"/>
    </reaction>
</comment>
<comment type="pathway">
    <text evidence="1">Amino-acid biosynthesis; L-proline biosynthesis; L-glutamate 5-semialdehyde from L-glutamate: step 1/2.</text>
</comment>
<comment type="subcellular location">
    <subcellularLocation>
        <location evidence="1">Cytoplasm</location>
    </subcellularLocation>
</comment>
<comment type="similarity">
    <text evidence="1">Belongs to the glutamate 5-kinase family.</text>
</comment>
<protein>
    <recommendedName>
        <fullName evidence="1">Glutamate 5-kinase</fullName>
        <ecNumber evidence="1">2.7.2.11</ecNumber>
    </recommendedName>
    <alternativeName>
        <fullName evidence="1">Gamma-glutamyl kinase</fullName>
        <shortName evidence="1">GK</shortName>
    </alternativeName>
</protein>
<organism>
    <name type="scientific">Synechococcus sp. (strain CC9902)</name>
    <dbReference type="NCBI Taxonomy" id="316279"/>
    <lineage>
        <taxon>Bacteria</taxon>
        <taxon>Bacillati</taxon>
        <taxon>Cyanobacteriota</taxon>
        <taxon>Cyanophyceae</taxon>
        <taxon>Synechococcales</taxon>
        <taxon>Synechococcaceae</taxon>
        <taxon>Synechococcus</taxon>
    </lineage>
</organism>
<name>PROB_SYNS9</name>
<keyword id="KW-0028">Amino-acid biosynthesis</keyword>
<keyword id="KW-0067">ATP-binding</keyword>
<keyword id="KW-0963">Cytoplasm</keyword>
<keyword id="KW-0418">Kinase</keyword>
<keyword id="KW-0547">Nucleotide-binding</keyword>
<keyword id="KW-0641">Proline biosynthesis</keyword>
<keyword id="KW-1185">Reference proteome</keyword>
<keyword id="KW-0808">Transferase</keyword>
<feature type="chain" id="PRO_0000253009" description="Glutamate 5-kinase">
    <location>
        <begin position="1"/>
        <end position="357"/>
    </location>
</feature>
<feature type="domain" description="PUA" evidence="1">
    <location>
        <begin position="270"/>
        <end position="341"/>
    </location>
</feature>
<feature type="binding site" evidence="1">
    <location>
        <position position="7"/>
    </location>
    <ligand>
        <name>ATP</name>
        <dbReference type="ChEBI" id="CHEBI:30616"/>
    </ligand>
</feature>
<feature type="binding site" evidence="1">
    <location>
        <position position="43"/>
    </location>
    <ligand>
        <name>substrate</name>
    </ligand>
</feature>
<feature type="binding site" evidence="1">
    <location>
        <position position="130"/>
    </location>
    <ligand>
        <name>substrate</name>
    </ligand>
</feature>
<feature type="binding site" evidence="1">
    <location>
        <position position="142"/>
    </location>
    <ligand>
        <name>substrate</name>
    </ligand>
</feature>
<feature type="binding site" evidence="1">
    <location>
        <begin position="162"/>
        <end position="163"/>
    </location>
    <ligand>
        <name>ATP</name>
        <dbReference type="ChEBI" id="CHEBI:30616"/>
    </ligand>
</feature>
<feature type="binding site" evidence="1">
    <location>
        <begin position="205"/>
        <end position="211"/>
    </location>
    <ligand>
        <name>ATP</name>
        <dbReference type="ChEBI" id="CHEBI:30616"/>
    </ligand>
</feature>
<gene>
    <name evidence="1" type="primary">proB</name>
    <name type="ordered locus">Syncc9902_0786</name>
</gene>
<evidence type="ECO:0000255" key="1">
    <source>
        <dbReference type="HAMAP-Rule" id="MF_00456"/>
    </source>
</evidence>
<reference key="1">
    <citation type="submission" date="2005-08" db="EMBL/GenBank/DDBJ databases">
        <title>Complete sequence of Synechococcus sp. CC9902.</title>
        <authorList>
            <person name="Copeland A."/>
            <person name="Lucas S."/>
            <person name="Lapidus A."/>
            <person name="Barry K."/>
            <person name="Detter J.C."/>
            <person name="Glavina T."/>
            <person name="Hammon N."/>
            <person name="Israni S."/>
            <person name="Pitluck S."/>
            <person name="Martinez M."/>
            <person name="Schmutz J."/>
            <person name="Larimer F."/>
            <person name="Land M."/>
            <person name="Kyrpides N."/>
            <person name="Ivanova N."/>
            <person name="Richardson P."/>
        </authorList>
    </citation>
    <scope>NUCLEOTIDE SEQUENCE [LARGE SCALE GENOMIC DNA]</scope>
    <source>
        <strain>CC9902</strain>
    </source>
</reference>
<sequence>MTLWVVKLGTSLLRGDTAATIEGYASGLAAAMRRGDQVVLVTSGAVGLGCQKLHLPKRPDTVVALQAAAATGQGYLMALYERAMAVHGLSVAQVLLTRSDLVDRRRYQNASGTLQQLLAWGVLPVINENDALSSAELRFGDNDTLSALVAAAVGAHQLLLLTDVDRLYSSDPRSDANAQPITDVHHPRDLKWLEAGAGDGGRWGTGGMTTKLAAARIATASGVTVHLADGRDPARLAGLLEGDRGGTVFHPHPEPLGNRRSWLAHVLVPEGELCLDQGACQALLHRGASLLLVGVTAVKGQFEANRPVLLRDPDGQELGRGLCTLNSNQVRQALSVVTDAEASPVVVHRDALVLQDR</sequence>